<protein>
    <recommendedName>
        <fullName evidence="14">E3 ubiquitin-protein ligase CHIP</fullName>
        <ecNumber evidence="1">2.3.2.27</ecNumber>
    </recommendedName>
    <alternativeName>
        <fullName evidence="1">Carboxy terminus of Hsp70-interacting protein</fullName>
    </alternativeName>
    <alternativeName>
        <fullName evidence="14">RING-type E3 ubiquitin transferase CHIP</fullName>
    </alternativeName>
    <alternativeName>
        <fullName evidence="17">STIP1 homology and U box-containing protein 1</fullName>
    </alternativeName>
</protein>
<feature type="chain" id="PRO_0000459701" description="E3 ubiquitin-protein ligase CHIP">
    <location>
        <begin position="1"/>
        <end position="304"/>
    </location>
</feature>
<feature type="repeat" description="TPR 1" evidence="3">
    <location>
        <begin position="27"/>
        <end position="60"/>
    </location>
</feature>
<feature type="repeat" description="TPR 2" evidence="3">
    <location>
        <begin position="61"/>
        <end position="94"/>
    </location>
</feature>
<feature type="repeat" description="TPR 3" evidence="3">
    <location>
        <begin position="96"/>
        <end position="128"/>
    </location>
</feature>
<feature type="domain" description="U-box" evidence="4">
    <location>
        <begin position="227"/>
        <end position="301"/>
    </location>
</feature>
<feature type="region of interest" description="Disordered" evidence="5">
    <location>
        <begin position="1"/>
        <end position="30"/>
    </location>
</feature>
<feature type="region of interest" description="Required for interaction with MAPK7" evidence="1">
    <location>
        <begin position="102"/>
        <end position="201"/>
    </location>
</feature>
<feature type="region of interest" description="Required for interaction with and ubiquitination of MYOCD" evidence="6">
    <location>
        <begin position="143"/>
        <end position="197"/>
    </location>
</feature>
<feature type="region of interest" description="Required for ubiquitination of FOXO1" evidence="1">
    <location>
        <begin position="144"/>
        <end position="304"/>
    </location>
</feature>
<feature type="region of interest" description="Required for interaction with FOXO1" evidence="1">
    <location>
        <begin position="144"/>
        <end position="198"/>
    </location>
</feature>
<feature type="compositionally biased region" description="Basic and acidic residues" evidence="5">
    <location>
        <begin position="1"/>
        <end position="10"/>
    </location>
</feature>
<feature type="compositionally biased region" description="Gly residues" evidence="5">
    <location>
        <begin position="11"/>
        <end position="20"/>
    </location>
</feature>
<feature type="modified residue" description="Phosphoserine" evidence="2">
    <location>
        <position position="20"/>
    </location>
</feature>
<feature type="modified residue" description="Phosphoserine" evidence="2">
    <location>
        <position position="24"/>
    </location>
</feature>
<feature type="modified residue" description="Phosphoserine" evidence="2">
    <location>
        <position position="26"/>
    </location>
</feature>
<feature type="modified residue" description="Phosphoserine" evidence="1">
    <location>
        <position position="150"/>
    </location>
</feature>
<feature type="modified residue" description="Phosphoserine" evidence="1">
    <location>
        <position position="274"/>
    </location>
</feature>
<feature type="cross-link" description="Glycyl lysine isopeptide (Lys-Gly) (interchain with G-Cter in ubiquitin)" evidence="2">
    <location>
        <position position="2"/>
    </location>
</feature>
<feature type="cross-link" description="Glycyl lysine isopeptide (Lys-Gly) (interchain with G-Cter in ubiquitin)" evidence="1">
    <location>
        <position position="23"/>
    </location>
</feature>
<feature type="cross-link" description="Glycyl lysine isopeptide (Lys-Gly) (interchain with G-Cter in ubiquitin)" evidence="1">
    <location>
        <position position="222"/>
    </location>
</feature>
<feature type="cross-link" description="Glycyl lysine isopeptide (Lys-Gly) (interchain with G-Cter in ubiquitin)" evidence="1">
    <location>
        <position position="256"/>
    </location>
</feature>
<name>CHIP_RAT</name>
<keyword id="KW-0963">Cytoplasm</keyword>
<keyword id="KW-0227">DNA damage</keyword>
<keyword id="KW-0234">DNA repair</keyword>
<keyword id="KW-1017">Isopeptide bond</keyword>
<keyword id="KW-0496">Mitochondrion</keyword>
<keyword id="KW-0539">Nucleus</keyword>
<keyword id="KW-0597">Phosphoprotein</keyword>
<keyword id="KW-1185">Reference proteome</keyword>
<keyword id="KW-0677">Repeat</keyword>
<keyword id="KW-0802">TPR repeat</keyword>
<keyword id="KW-0808">Transferase</keyword>
<keyword id="KW-0832">Ubl conjugation</keyword>
<keyword id="KW-0833">Ubl conjugation pathway</keyword>
<sequence length="304" mass="34886">MKGKEEKEGGARLGTGGGGSPDKSPSAQELKEQGNRLFVGRKYPEAAACYGRAITRNPLVAVYYTNRALCYLKMQQPEQALADCRRALELDGQSVKAHFFLGQCQLEMESYDEAIANLQRAYSLAKEQRLNFGDDIPSALRIAKKKRWNSIEERRIHQESELHSYLTRLIAAERERELEECQRNHEGDEDDGHIRAQQACIEAKHDKYMADMNELFSQVDEKRKKRDIPDYLCGKISFELMREPCITPSGITYDRKDIEEHLQRVGHFDPVTRSPLTQEQLIPNLAMKEVIDAFISENGWVEDY</sequence>
<dbReference type="EC" id="2.3.2.27" evidence="1"/>
<dbReference type="EMBL" id="CH473948">
    <property type="protein sequence ID" value="EDM03968.1"/>
    <property type="molecule type" value="Genomic_DNA"/>
</dbReference>
<dbReference type="RefSeq" id="NP_001020796.2">
    <property type="nucleotide sequence ID" value="NM_001025625.2"/>
</dbReference>
<dbReference type="SMR" id="A6HD62"/>
<dbReference type="CORUM" id="A6HD62"/>
<dbReference type="IntAct" id="A6HD62">
    <property type="interactions" value="2"/>
</dbReference>
<dbReference type="MINT" id="A6HD62"/>
<dbReference type="PhosphoSitePlus" id="A6HD62"/>
<dbReference type="PaxDb" id="10116-ENSRNOP00000026921"/>
<dbReference type="Ensembl" id="ENSRNOT00000026921.7">
    <property type="protein sequence ID" value="ENSRNOP00000026921.4"/>
    <property type="gene ID" value="ENSRNOG00000019798.7"/>
</dbReference>
<dbReference type="GeneID" id="287155"/>
<dbReference type="KEGG" id="rno:287155"/>
<dbReference type="AGR" id="RGD:1306167"/>
<dbReference type="CTD" id="10273"/>
<dbReference type="RGD" id="1306167">
    <property type="gene designation" value="Stub1"/>
</dbReference>
<dbReference type="eggNOG" id="KOG4642">
    <property type="taxonomic scope" value="Eukaryota"/>
</dbReference>
<dbReference type="GeneTree" id="ENSGT00930000151045"/>
<dbReference type="HOGENOM" id="CLU_056455_1_0_1"/>
<dbReference type="OMA" id="WAGVEHD"/>
<dbReference type="OrthoDB" id="26502at9989"/>
<dbReference type="TreeFam" id="TF313937"/>
<dbReference type="Reactome" id="R-RNO-2173788">
    <property type="pathway name" value="Downregulation of TGF-beta receptor signaling"/>
</dbReference>
<dbReference type="Reactome" id="R-RNO-5357905">
    <property type="pathway name" value="Regulation of TNFR1 signaling"/>
</dbReference>
<dbReference type="Reactome" id="R-RNO-5675482">
    <property type="pathway name" value="Regulation of necroptotic cell death"/>
</dbReference>
<dbReference type="Reactome" id="R-RNO-8863795">
    <property type="pathway name" value="Downregulation of ERBB2 signaling"/>
</dbReference>
<dbReference type="Reactome" id="R-RNO-8948751">
    <property type="pathway name" value="Regulation of PTEN stability and activity"/>
</dbReference>
<dbReference type="Reactome" id="R-RNO-983168">
    <property type="pathway name" value="Antigen processing: Ubiquitination &amp; Proteasome degradation"/>
</dbReference>
<dbReference type="UniPathway" id="UPA00143"/>
<dbReference type="Proteomes" id="UP000002494">
    <property type="component" value="Chromosome 10"/>
</dbReference>
<dbReference type="Proteomes" id="UP000234681">
    <property type="component" value="Chromosome 10"/>
</dbReference>
<dbReference type="Bgee" id="ENSRNOG00000019798">
    <property type="expression patterns" value="Expressed in frontal cortex and 18 other cell types or tissues"/>
</dbReference>
<dbReference type="GO" id="GO:0005737">
    <property type="term" value="C:cytoplasm"/>
    <property type="evidence" value="ECO:0000314"/>
    <property type="project" value="UniProtKB"/>
</dbReference>
<dbReference type="GO" id="GO:0005829">
    <property type="term" value="C:cytosol"/>
    <property type="evidence" value="ECO:0007669"/>
    <property type="project" value="Ensembl"/>
</dbReference>
<dbReference type="GO" id="GO:0005783">
    <property type="term" value="C:endoplasmic reticulum"/>
    <property type="evidence" value="ECO:0000266"/>
    <property type="project" value="RGD"/>
</dbReference>
<dbReference type="GO" id="GO:0005739">
    <property type="term" value="C:mitochondrion"/>
    <property type="evidence" value="ECO:0000314"/>
    <property type="project" value="UniProtKB"/>
</dbReference>
<dbReference type="GO" id="GO:0042405">
    <property type="term" value="C:nuclear inclusion body"/>
    <property type="evidence" value="ECO:0000266"/>
    <property type="project" value="RGD"/>
</dbReference>
<dbReference type="GO" id="GO:0005654">
    <property type="term" value="C:nucleoplasm"/>
    <property type="evidence" value="ECO:0007669"/>
    <property type="project" value="Ensembl"/>
</dbReference>
<dbReference type="GO" id="GO:0005634">
    <property type="term" value="C:nucleus"/>
    <property type="evidence" value="ECO:0000314"/>
    <property type="project" value="UniProtKB"/>
</dbReference>
<dbReference type="GO" id="GO:0101031">
    <property type="term" value="C:protein folding chaperone complex"/>
    <property type="evidence" value="ECO:0000266"/>
    <property type="project" value="RGD"/>
</dbReference>
<dbReference type="GO" id="GO:0000151">
    <property type="term" value="C:ubiquitin ligase complex"/>
    <property type="evidence" value="ECO:0000266"/>
    <property type="project" value="RGD"/>
</dbReference>
<dbReference type="GO" id="GO:0030018">
    <property type="term" value="C:Z disc"/>
    <property type="evidence" value="ECO:0000266"/>
    <property type="project" value="RGD"/>
</dbReference>
<dbReference type="GO" id="GO:0019899">
    <property type="term" value="F:enzyme binding"/>
    <property type="evidence" value="ECO:0000266"/>
    <property type="project" value="RGD"/>
</dbReference>
<dbReference type="GO" id="GO:0001664">
    <property type="term" value="F:G protein-coupled receptor binding"/>
    <property type="evidence" value="ECO:0000266"/>
    <property type="project" value="RGD"/>
</dbReference>
<dbReference type="GO" id="GO:0031072">
    <property type="term" value="F:heat shock protein binding"/>
    <property type="evidence" value="ECO:0000266"/>
    <property type="project" value="RGD"/>
</dbReference>
<dbReference type="GO" id="GO:0030544">
    <property type="term" value="F:Hsp70 protein binding"/>
    <property type="evidence" value="ECO:0000266"/>
    <property type="project" value="RGD"/>
</dbReference>
<dbReference type="GO" id="GO:0051879">
    <property type="term" value="F:Hsp90 protein binding"/>
    <property type="evidence" value="ECO:0000266"/>
    <property type="project" value="RGD"/>
</dbReference>
<dbReference type="GO" id="GO:0019900">
    <property type="term" value="F:kinase binding"/>
    <property type="evidence" value="ECO:0000266"/>
    <property type="project" value="RGD"/>
</dbReference>
<dbReference type="GO" id="GO:0051787">
    <property type="term" value="F:misfolded protein binding"/>
    <property type="evidence" value="ECO:0000266"/>
    <property type="project" value="RGD"/>
</dbReference>
<dbReference type="GO" id="GO:0042803">
    <property type="term" value="F:protein homodimerization activity"/>
    <property type="evidence" value="ECO:0000266"/>
    <property type="project" value="RGD"/>
</dbReference>
<dbReference type="GO" id="GO:0051087">
    <property type="term" value="F:protein-folding chaperone binding"/>
    <property type="evidence" value="ECO:0000353"/>
    <property type="project" value="ARUK-UCL"/>
</dbReference>
<dbReference type="GO" id="GO:0070412">
    <property type="term" value="F:R-SMAD binding"/>
    <property type="evidence" value="ECO:0000266"/>
    <property type="project" value="RGD"/>
</dbReference>
<dbReference type="GO" id="GO:0046332">
    <property type="term" value="F:SMAD binding"/>
    <property type="evidence" value="ECO:0000266"/>
    <property type="project" value="RGD"/>
</dbReference>
<dbReference type="GO" id="GO:0030911">
    <property type="term" value="F:TPR domain binding"/>
    <property type="evidence" value="ECO:0000266"/>
    <property type="project" value="RGD"/>
</dbReference>
<dbReference type="GO" id="GO:0061630">
    <property type="term" value="F:ubiquitin protein ligase activity"/>
    <property type="evidence" value="ECO:0000314"/>
    <property type="project" value="UniProtKB"/>
</dbReference>
<dbReference type="GO" id="GO:0031625">
    <property type="term" value="F:ubiquitin protein ligase binding"/>
    <property type="evidence" value="ECO:0000266"/>
    <property type="project" value="RGD"/>
</dbReference>
<dbReference type="GO" id="GO:0004842">
    <property type="term" value="F:ubiquitin-protein transferase activity"/>
    <property type="evidence" value="ECO:0000266"/>
    <property type="project" value="RGD"/>
</dbReference>
<dbReference type="GO" id="GO:0034450">
    <property type="term" value="F:ubiquitin-ubiquitin ligase activity"/>
    <property type="evidence" value="ECO:0000266"/>
    <property type="project" value="RGD"/>
</dbReference>
<dbReference type="GO" id="GO:0034605">
    <property type="term" value="P:cellular response to heat"/>
    <property type="evidence" value="ECO:0000314"/>
    <property type="project" value="ARUK-UCL"/>
</dbReference>
<dbReference type="GO" id="GO:0071456">
    <property type="term" value="P:cellular response to hypoxia"/>
    <property type="evidence" value="ECO:0000314"/>
    <property type="project" value="ARUK-UCL"/>
</dbReference>
<dbReference type="GO" id="GO:0071218">
    <property type="term" value="P:cellular response to misfolded protein"/>
    <property type="evidence" value="ECO:0000266"/>
    <property type="project" value="RGD"/>
</dbReference>
<dbReference type="GO" id="GO:0061684">
    <property type="term" value="P:chaperone-mediated autophagy"/>
    <property type="evidence" value="ECO:0000315"/>
    <property type="project" value="ARUK-UCL"/>
</dbReference>
<dbReference type="GO" id="GO:0006281">
    <property type="term" value="P:DNA repair"/>
    <property type="evidence" value="ECO:0007669"/>
    <property type="project" value="UniProtKB-KW"/>
</dbReference>
<dbReference type="GO" id="GO:0030968">
    <property type="term" value="P:endoplasmic reticulum unfolded protein response"/>
    <property type="evidence" value="ECO:0000266"/>
    <property type="project" value="RGD"/>
</dbReference>
<dbReference type="GO" id="GO:0036503">
    <property type="term" value="P:ERAD pathway"/>
    <property type="evidence" value="ECO:0000266"/>
    <property type="project" value="RGD"/>
</dbReference>
<dbReference type="GO" id="GO:0000165">
    <property type="term" value="P:MAPK cascade"/>
    <property type="evidence" value="ECO:0000315"/>
    <property type="project" value="UniProtKB"/>
</dbReference>
<dbReference type="GO" id="GO:0043066">
    <property type="term" value="P:negative regulation of apoptotic process"/>
    <property type="evidence" value="ECO:0000315"/>
    <property type="project" value="UniProtKB"/>
</dbReference>
<dbReference type="GO" id="GO:0010614">
    <property type="term" value="P:negative regulation of cardiac muscle hypertrophy"/>
    <property type="evidence" value="ECO:0000315"/>
    <property type="project" value="UniProtKB"/>
</dbReference>
<dbReference type="GO" id="GO:0035359">
    <property type="term" value="P:negative regulation of peroxisome proliferator activated receptor signaling pathway"/>
    <property type="evidence" value="ECO:0000250"/>
    <property type="project" value="UniProtKB"/>
</dbReference>
<dbReference type="GO" id="GO:0034392">
    <property type="term" value="P:negative regulation of smooth muscle cell apoptotic process"/>
    <property type="evidence" value="ECO:0000315"/>
    <property type="project" value="UniProtKB"/>
</dbReference>
<dbReference type="GO" id="GO:0030512">
    <property type="term" value="P:negative regulation of transforming growth factor beta receptor signaling pathway"/>
    <property type="evidence" value="ECO:0000266"/>
    <property type="project" value="RGD"/>
</dbReference>
<dbReference type="GO" id="GO:1904694">
    <property type="term" value="P:negative regulation of vascular associated smooth muscle contraction"/>
    <property type="evidence" value="ECO:0000315"/>
    <property type="project" value="UniProtKB"/>
</dbReference>
<dbReference type="GO" id="GO:0090035">
    <property type="term" value="P:positive regulation of chaperone-mediated protein complex assembly"/>
    <property type="evidence" value="ECO:0000266"/>
    <property type="project" value="RGD"/>
</dbReference>
<dbReference type="GO" id="GO:1904294">
    <property type="term" value="P:positive regulation of ERAD pathway"/>
    <property type="evidence" value="ECO:0000266"/>
    <property type="project" value="RGD"/>
</dbReference>
<dbReference type="GO" id="GO:1901526">
    <property type="term" value="P:positive regulation of mitophagy"/>
    <property type="evidence" value="ECO:0000315"/>
    <property type="project" value="UniProtKB"/>
</dbReference>
<dbReference type="GO" id="GO:0032436">
    <property type="term" value="P:positive regulation of proteasomal ubiquitin-dependent protein catabolic process"/>
    <property type="evidence" value="ECO:0000266"/>
    <property type="project" value="RGD"/>
</dbReference>
<dbReference type="GO" id="GO:0031398">
    <property type="term" value="P:positive regulation of protein ubiquitination"/>
    <property type="evidence" value="ECO:0000266"/>
    <property type="project" value="RGD"/>
</dbReference>
<dbReference type="GO" id="GO:0045862">
    <property type="term" value="P:positive regulation of proteolysis"/>
    <property type="evidence" value="ECO:0000266"/>
    <property type="project" value="RGD"/>
</dbReference>
<dbReference type="GO" id="GO:0034393">
    <property type="term" value="P:positive regulation of smooth muscle cell apoptotic process"/>
    <property type="evidence" value="ECO:0000315"/>
    <property type="project" value="UniProtKB"/>
</dbReference>
<dbReference type="GO" id="GO:0043161">
    <property type="term" value="P:proteasome-mediated ubiquitin-dependent protein catabolic process"/>
    <property type="evidence" value="ECO:0000250"/>
    <property type="project" value="UniProtKB"/>
</dbReference>
<dbReference type="GO" id="GO:0051865">
    <property type="term" value="P:protein autoubiquitination"/>
    <property type="evidence" value="ECO:0000266"/>
    <property type="project" value="RGD"/>
</dbReference>
<dbReference type="GO" id="GO:0070534">
    <property type="term" value="P:protein K63-linked ubiquitination"/>
    <property type="evidence" value="ECO:0000266"/>
    <property type="project" value="RGD"/>
</dbReference>
<dbReference type="GO" id="GO:0006513">
    <property type="term" value="P:protein monoubiquitination"/>
    <property type="evidence" value="ECO:0000266"/>
    <property type="project" value="RGD"/>
</dbReference>
<dbReference type="GO" id="GO:0000209">
    <property type="term" value="P:protein polyubiquitination"/>
    <property type="evidence" value="ECO:0000266"/>
    <property type="project" value="RGD"/>
</dbReference>
<dbReference type="GO" id="GO:0006515">
    <property type="term" value="P:protein quality control for misfolded or incompletely synthesized proteins"/>
    <property type="evidence" value="ECO:0000266"/>
    <property type="project" value="RGD"/>
</dbReference>
<dbReference type="GO" id="GO:0050821">
    <property type="term" value="P:protein stabilization"/>
    <property type="evidence" value="ECO:0000266"/>
    <property type="project" value="RGD"/>
</dbReference>
<dbReference type="GO" id="GO:0016567">
    <property type="term" value="P:protein ubiquitination"/>
    <property type="evidence" value="ECO:0000314"/>
    <property type="project" value="UniProtKB"/>
</dbReference>
<dbReference type="GO" id="GO:0031943">
    <property type="term" value="P:regulation of glucocorticoid metabolic process"/>
    <property type="evidence" value="ECO:0000266"/>
    <property type="project" value="RGD"/>
</dbReference>
<dbReference type="GO" id="GO:0031647">
    <property type="term" value="P:regulation of protein stability"/>
    <property type="evidence" value="ECO:0000266"/>
    <property type="project" value="RGD"/>
</dbReference>
<dbReference type="GO" id="GO:0002931">
    <property type="term" value="P:response to ischemia"/>
    <property type="evidence" value="ECO:0000314"/>
    <property type="project" value="ARUK-UCL"/>
</dbReference>
<dbReference type="GO" id="GO:0006511">
    <property type="term" value="P:ubiquitin-dependent protein catabolic process"/>
    <property type="evidence" value="ECO:0000266"/>
    <property type="project" value="RGD"/>
</dbReference>
<dbReference type="CDD" id="cd16654">
    <property type="entry name" value="RING-Ubox_CHIP"/>
    <property type="match status" value="1"/>
</dbReference>
<dbReference type="FunFam" id="1.25.40.10:FF:000198">
    <property type="entry name" value="E3 ubiquitin-protein ligase CHIP isoform X2"/>
    <property type="match status" value="1"/>
</dbReference>
<dbReference type="FunFam" id="3.30.40.10:FF:000124">
    <property type="entry name" value="STIP1 homology and U box-containing protein 1"/>
    <property type="match status" value="1"/>
</dbReference>
<dbReference type="Gene3D" id="6.10.140.2020">
    <property type="match status" value="1"/>
</dbReference>
<dbReference type="Gene3D" id="1.25.40.10">
    <property type="entry name" value="Tetratricopeptide repeat domain"/>
    <property type="match status" value="1"/>
</dbReference>
<dbReference type="Gene3D" id="3.30.40.10">
    <property type="entry name" value="Zinc/RING finger domain, C3HC4 (zinc finger)"/>
    <property type="match status" value="1"/>
</dbReference>
<dbReference type="InterPro" id="IPR045202">
    <property type="entry name" value="CHIP_RING-Ubox"/>
</dbReference>
<dbReference type="InterPro" id="IPR041312">
    <property type="entry name" value="CHIP_TPR_N"/>
</dbReference>
<dbReference type="InterPro" id="IPR011990">
    <property type="entry name" value="TPR-like_helical_dom_sf"/>
</dbReference>
<dbReference type="InterPro" id="IPR019734">
    <property type="entry name" value="TPR_rpt"/>
</dbReference>
<dbReference type="InterPro" id="IPR003613">
    <property type="entry name" value="Ubox_domain"/>
</dbReference>
<dbReference type="InterPro" id="IPR013083">
    <property type="entry name" value="Znf_RING/FYVE/PHD"/>
</dbReference>
<dbReference type="PANTHER" id="PTHR46803">
    <property type="entry name" value="E3 UBIQUITIN-PROTEIN LIGASE CHIP"/>
    <property type="match status" value="1"/>
</dbReference>
<dbReference type="PANTHER" id="PTHR46803:SF2">
    <property type="entry name" value="E3 UBIQUITIN-PROTEIN LIGASE CHIP"/>
    <property type="match status" value="1"/>
</dbReference>
<dbReference type="Pfam" id="PF12895">
    <property type="entry name" value="ANAPC3"/>
    <property type="match status" value="1"/>
</dbReference>
<dbReference type="Pfam" id="PF18391">
    <property type="entry name" value="CHIP_TPR_N"/>
    <property type="match status" value="1"/>
</dbReference>
<dbReference type="Pfam" id="PF04564">
    <property type="entry name" value="U-box"/>
    <property type="match status" value="1"/>
</dbReference>
<dbReference type="SMART" id="SM00028">
    <property type="entry name" value="TPR"/>
    <property type="match status" value="3"/>
</dbReference>
<dbReference type="SMART" id="SM00504">
    <property type="entry name" value="Ubox"/>
    <property type="match status" value="1"/>
</dbReference>
<dbReference type="SUPFAM" id="SSF57850">
    <property type="entry name" value="RING/U-box"/>
    <property type="match status" value="1"/>
</dbReference>
<dbReference type="SUPFAM" id="SSF48452">
    <property type="entry name" value="TPR-like"/>
    <property type="match status" value="1"/>
</dbReference>
<dbReference type="PROSITE" id="PS50005">
    <property type="entry name" value="TPR"/>
    <property type="match status" value="2"/>
</dbReference>
<dbReference type="PROSITE" id="PS51698">
    <property type="entry name" value="U_BOX"/>
    <property type="match status" value="1"/>
</dbReference>
<comment type="function">
    <text evidence="1 2 6 7 8 9 10 11 12">E3 ubiquitin-protein ligase which targets misfolded chaperone substrates towards proteasomal degradation (PubMed:26265139). Plays a role in the maintenance of mitochondrial morphology and promotes mitophagic removal of dysfunctional mitochondria; thereby acts as a protector against apoptosis in response to cellular stress (PubMed:29934347). Negatively regulates vascular smooth muscle contraction, via degradation of the transcriptional activator MYOCD and subsequent loss of transcription of genes involved in vascular smooth muscle contraction (PubMed:19237536). Promotes survival and proliferation of cardiac smooth muscle cells via ubiquitination and degradation of FOXO1, resulting in subsequent repression of FOXO1-mediated transcription of pro-apoptotic genes (PubMed:19483080). Ubiquitinates ICER-type isoforms of CREM and targets them for proteasomal degradation, thereby acts as a positive effector of MAPK/ERK-mediated inhibition of apoptosis in cardiomyocytes (PubMed:20724525). Inhibits lipopolysaccharide-induced apoptosis and hypertrophy in cardiomyocytes, via ubiquitination and subsequent proteasomal degradation of NFATC3 (PubMed:30980393). Collaborates with ATXN3 in the degradation of misfolded chaperone substrates: ATXN3 restricting the length of ubiquitin chain attached to STUB1/CHIP substrates and preventing further chain extension (By similarity). Ubiquitinates NOS1 in concert with Hsp70 and Hsp40 (By similarity). Modulates the activity of several chaperone complexes, including Hsp70, Hsc70 and Hsp90 (By similarity). Ubiquitinates CHRNA3 targeting it for endoplasmic reticulum-associated degradation in cortical neurons, as part of the STUB1-VCP-UBXN2A complex (PubMed:26265139). Ubiquitinates and promotes ESR1 proteasomal degradation in response to age-related circulating estradiol (17-beta-estradiol/E2) decline, thereby promotes neuronal apoptosis in response to ischemic reperfusion injury (PubMed:21808025). Mediates transfer of non-canonical short ubiquitin chains to HSPA8 that have no effect on HSPA8 degradation (By similarity). Mediates polyubiquitination of DNA polymerase beta (POLB) at 'Lys-41', 'Lys-61' and 'Lys-81', thereby playing a role in base-excision repair: catalyzes polyubiquitination by amplifying the HUWE1/ARF-BP1-dependent monoubiquitination and leading to POLB-degradation by the proteasome (By similarity). Mediates polyubiquitination of CYP3A4 (By similarity). Ubiquitinates EPHA2 and may regulate the receptor stability and activity through proteasomal degradation (By similarity). Acts as a co-chaperone for HSPA1A and HSPA1B chaperone proteins and promotes ubiquitin-mediated protein degradation (By similarity). Negatively regulates the suppressive function of regulatory T-cells (Treg) during inflammation by mediating the ubiquitination and degradation of FOXP3 in a HSPA1A/B-dependent manner (By similarity). Catalyzes monoubiquitination of SIRT6, preventing its degradation by the proteasome (By similarity). Likely mediates polyubiquitination and down-regulates plasma membrane expression of PD-L1/CD274, an immune inhibitory ligand critical for immune tolerance to self and antitumor immunity (By similarity). Negatively regulates TGF-beta signaling by modulating the basal level of SMAD3 via ubiquitin-mediated degradation (By similarity). Plays a role in the degradation of TP53 (By similarity). Mediates ubiquitination of RIPK3 leading to its subsequent proteasome-dependent degradation (By similarity). May regulate myosin assembly in striated muscles together with UBE4B and VCP/p97 by targeting myosin chaperone UNC45B for proteasomal degradation (By similarity). Ubiquitinates PPARG in macrophages playing a role in M2 macrophages polarization and angiogenesis (By similarity).</text>
</comment>
<comment type="catalytic activity">
    <reaction evidence="2">
        <text>S-ubiquitinyl-[E2 ubiquitin-conjugating enzyme]-L-cysteine + [acceptor protein]-L-lysine = [E2 ubiquitin-conjugating enzyme]-L-cysteine + N(6)-ubiquitinyl-[acceptor protein]-L-lysine.</text>
        <dbReference type="EC" id="2.3.2.27"/>
    </reaction>
</comment>
<comment type="pathway">
    <text evidence="2">Protein modification; protein ubiquitination.</text>
</comment>
<comment type="subunit">
    <text evidence="1 2 6 9 10 12">Homodimer (By similarity). Interacts with BAG2, and with the E2 ubiquitin conjugating enzymes UBE2D1, UBE2D2 and UBE2D3. Detected in a ternary complex containing STUB1, HSPA1A and HSPBP1. Part of a complex composed of STUB1/CHIP, VCP/p97, CHRNA3, and UBXN2A that modulates the ubiquitination and endoplasmic reticulum-associated degradation (ERAD) of CHRNA3 (PubMed:26265139). Within the complex UBXN2A acts as a scaffold protein required for the interaction of CHRNA3 with VCP/p97, this interaction also inhibits CHRNA3 ubiquitination by STUB1/CHIP and subsequently ERAD (PubMed:26265139). Interacts with MKKS. Interacts with DNAAF4 (By similarity). Interacts (via the U-box domain) with the UBE2V2-UBE2N heterodimer; the complex has a specific 'Lys-63'-linked polyubiquitination activity (By similarity). Interacts (when monoubiquitinated) with ATXN3 (By similarity). Interacts with UBE2W (By similarity). Interacts with DNAJB6 (By similarity). Interacts with FLCN and HSP90AA1. Interacts with HSP90. Interacts with UBE2N and UBE2V1. Interacts (via TPR repeats) with HSPA8 (via C-terminus) (By similarity). Interacts (via TPR repeats) with HSPA1A (via C-terminus) (PubMed:19237536). Interacts with the non-acetylated form of HSPA1A and HSPA1B. Interacts with SMAD3 and HSP90AB1 (By similarity). Interacts with UBE4B (By similarity). Interacts with PRMT5 (By similarity). Interacts with MYOCD (via C-terminus) (PubMed:19237536). Interacts with FOXO1 (when phosphorylated on 'Ser-250') (By similarity). Interacts with MAPK7/ERK5; the interaction is enhanced in the presence of IGF1 or MAP2K5 and promotes STUB1/CHIP E3 ligase activity (By similarity). Interacts with and ubiquitinates ESR1; the interaction is promoted in the absence of estradiol (17-beta-estradiol/E2) (PubMed:21808025). Interacts with ESR2 (PubMed:21808025). Interacts with and ubiquitinates NFATC3; HSPA1A/HSP70 is required as a co-chaperone (PubMed:30980393). In macrophages, interacts with PAQR3; the interaction promotes PPARG poylubiquitination and STUB1-mediated degradation (By similarity). Component of the chaperone-assisted selective autophagy (CASA) complex consisting of BAG3, HSPA8/HSC70, HSPB8 and STUB1/CHIP (By similarity).</text>
</comment>
<comment type="subcellular location">
    <subcellularLocation>
        <location evidence="6 7 12">Cytoplasm</location>
    </subcellularLocation>
    <subcellularLocation>
        <location evidence="6 12">Nucleus</location>
    </subcellularLocation>
    <subcellularLocation>
        <location evidence="11">Mitochondrion</location>
    </subcellularLocation>
    <text evidence="1 11">Translocates to the nucleus in response to inflammatory signals in regulatory T-cells (Treg) (By similarity). Localizes to mitochondria following oxygen and glucose deprivation-induced cellular stress (PubMed:29934347).</text>
</comment>
<comment type="tissue specificity">
    <text evidence="7 9">Expressed in the adventitia layer of the carotid artery (at protein level) (PubMed:19483080). Expressed in the CA1 region of the hippocampus (at protein level) (PubMed:21808025). Expressed in the uterus (at protein level) (PubMed:21808025).</text>
</comment>
<comment type="developmental stage">
    <text evidence="11">Expressed in neurons at 18.5 dpc (at protein level).</text>
</comment>
<comment type="induction">
    <text evidence="7 11">Induced by oxygen and glucose deprivation in neuronal cells (PubMed:29934347). Induced in the neointimal layer of the carotid artery by blood flow cessation injury (PubMed:19483080).</text>
</comment>
<comment type="domain">
    <text evidence="2">The U-box domain is required for the ubiquitin protein ligase activity.</text>
</comment>
<comment type="domain">
    <text evidence="1">The TPR domain is essential for ubiquitination mediated by UBE2D1.</text>
</comment>
<comment type="PTM">
    <text evidence="1 2">Auto-ubiquitinated; mediated by UBE2D1 and UBE2D2 and enhanced in the presence of MAP2K5 (By similarity). Monoubiquitinated at Lys-2 following cell stress by UBE2W, promoting the interaction with ATXN3 (By similarity).</text>
</comment>
<reference evidence="16" key="1">
    <citation type="journal article" date="2004" name="Nature">
        <title>Genome sequence of the Brown Norway rat yields insights into mammalian evolution.</title>
        <authorList>
            <person name="Gibbs R.A."/>
            <person name="Weinstock G.M."/>
            <person name="Metzker M.L."/>
            <person name="Muzny D.M."/>
            <person name="Sodergren E.J."/>
            <person name="Scherer S."/>
            <person name="Scott G."/>
            <person name="Steffen D."/>
            <person name="Worley K.C."/>
            <person name="Burch P.E."/>
            <person name="Okwuonu G."/>
            <person name="Hines S."/>
            <person name="Lewis L."/>
            <person name="Deramo C."/>
            <person name="Delgado O."/>
            <person name="Dugan-Rocha S."/>
            <person name="Miner G."/>
            <person name="Morgan M."/>
            <person name="Hawes A."/>
            <person name="Gill R."/>
            <person name="Holt R.A."/>
            <person name="Adams M.D."/>
            <person name="Amanatides P.G."/>
            <person name="Baden-Tillson H."/>
            <person name="Barnstead M."/>
            <person name="Chin S."/>
            <person name="Evans C.A."/>
            <person name="Ferriera S."/>
            <person name="Fosler C."/>
            <person name="Glodek A."/>
            <person name="Gu Z."/>
            <person name="Jennings D."/>
            <person name="Kraft C.L."/>
            <person name="Nguyen T."/>
            <person name="Pfannkoch C.M."/>
            <person name="Sitter C."/>
            <person name="Sutton G.G."/>
            <person name="Venter J.C."/>
            <person name="Woodage T."/>
            <person name="Smith D."/>
            <person name="Lee H.-M."/>
            <person name="Gustafson E."/>
            <person name="Cahill P."/>
            <person name="Kana A."/>
            <person name="Doucette-Stamm L."/>
            <person name="Weinstock K."/>
            <person name="Fechtel K."/>
            <person name="Weiss R.B."/>
            <person name="Dunn D.M."/>
            <person name="Green E.D."/>
            <person name="Blakesley R.W."/>
            <person name="Bouffard G.G."/>
            <person name="De Jong P.J."/>
            <person name="Osoegawa K."/>
            <person name="Zhu B."/>
            <person name="Marra M."/>
            <person name="Schein J."/>
            <person name="Bosdet I."/>
            <person name="Fjell C."/>
            <person name="Jones S."/>
            <person name="Krzywinski M."/>
            <person name="Mathewson C."/>
            <person name="Siddiqui A."/>
            <person name="Wye N."/>
            <person name="McPherson J."/>
            <person name="Zhao S."/>
            <person name="Fraser C.M."/>
            <person name="Shetty J."/>
            <person name="Shatsman S."/>
            <person name="Geer K."/>
            <person name="Chen Y."/>
            <person name="Abramzon S."/>
            <person name="Nierman W.C."/>
            <person name="Havlak P.H."/>
            <person name="Chen R."/>
            <person name="Durbin K.J."/>
            <person name="Egan A."/>
            <person name="Ren Y."/>
            <person name="Song X.-Z."/>
            <person name="Li B."/>
            <person name="Liu Y."/>
            <person name="Qin X."/>
            <person name="Cawley S."/>
            <person name="Cooney A.J."/>
            <person name="D'Souza L.M."/>
            <person name="Martin K."/>
            <person name="Wu J.Q."/>
            <person name="Gonzalez-Garay M.L."/>
            <person name="Jackson A.R."/>
            <person name="Kalafus K.J."/>
            <person name="McLeod M.P."/>
            <person name="Milosavljevic A."/>
            <person name="Virk D."/>
            <person name="Volkov A."/>
            <person name="Wheeler D.A."/>
            <person name="Zhang Z."/>
            <person name="Bailey J.A."/>
            <person name="Eichler E.E."/>
            <person name="Tuzun E."/>
            <person name="Birney E."/>
            <person name="Mongin E."/>
            <person name="Ureta-Vidal A."/>
            <person name="Woodwark C."/>
            <person name="Zdobnov E."/>
            <person name="Bork P."/>
            <person name="Suyama M."/>
            <person name="Torrents D."/>
            <person name="Alexandersson M."/>
            <person name="Trask B.J."/>
            <person name="Young J.M."/>
            <person name="Huang H."/>
            <person name="Wang H."/>
            <person name="Xing H."/>
            <person name="Daniels S."/>
            <person name="Gietzen D."/>
            <person name="Schmidt J."/>
            <person name="Stevens K."/>
            <person name="Vitt U."/>
            <person name="Wingrove J."/>
            <person name="Camara F."/>
            <person name="Mar Alba M."/>
            <person name="Abril J.F."/>
            <person name="Guigo R."/>
            <person name="Smit A."/>
            <person name="Dubchak I."/>
            <person name="Rubin E.M."/>
            <person name="Couronne O."/>
            <person name="Poliakov A."/>
            <person name="Huebner N."/>
            <person name="Ganten D."/>
            <person name="Goesele C."/>
            <person name="Hummel O."/>
            <person name="Kreitler T."/>
            <person name="Lee Y.-A."/>
            <person name="Monti J."/>
            <person name="Schulz H."/>
            <person name="Zimdahl H."/>
            <person name="Himmelbauer H."/>
            <person name="Lehrach H."/>
            <person name="Jacob H.J."/>
            <person name="Bromberg S."/>
            <person name="Gullings-Handley J."/>
            <person name="Jensen-Seaman M.I."/>
            <person name="Kwitek A.E."/>
            <person name="Lazar J."/>
            <person name="Pasko D."/>
            <person name="Tonellato P.J."/>
            <person name="Twigger S."/>
            <person name="Ponting C.P."/>
            <person name="Duarte J.M."/>
            <person name="Rice S."/>
            <person name="Goodstadt L."/>
            <person name="Beatson S.A."/>
            <person name="Emes R.D."/>
            <person name="Winter E.E."/>
            <person name="Webber C."/>
            <person name="Brandt P."/>
            <person name="Nyakatura G."/>
            <person name="Adetobi M."/>
            <person name="Chiaromonte F."/>
            <person name="Elnitski L."/>
            <person name="Eswara P."/>
            <person name="Hardison R.C."/>
            <person name="Hou M."/>
            <person name="Kolbe D."/>
            <person name="Makova K."/>
            <person name="Miller W."/>
            <person name="Nekrutenko A."/>
            <person name="Riemer C."/>
            <person name="Schwartz S."/>
            <person name="Taylor J."/>
            <person name="Yang S."/>
            <person name="Zhang Y."/>
            <person name="Lindpaintner K."/>
            <person name="Andrews T.D."/>
            <person name="Caccamo M."/>
            <person name="Clamp M."/>
            <person name="Clarke L."/>
            <person name="Curwen V."/>
            <person name="Durbin R.M."/>
            <person name="Eyras E."/>
            <person name="Searle S.M."/>
            <person name="Cooper G.M."/>
            <person name="Batzoglou S."/>
            <person name="Brudno M."/>
            <person name="Sidow A."/>
            <person name="Stone E.A."/>
            <person name="Payseur B.A."/>
            <person name="Bourque G."/>
            <person name="Lopez-Otin C."/>
            <person name="Puente X.S."/>
            <person name="Chakrabarti K."/>
            <person name="Chatterji S."/>
            <person name="Dewey C."/>
            <person name="Pachter L."/>
            <person name="Bray N."/>
            <person name="Yap V.B."/>
            <person name="Caspi A."/>
            <person name="Tesler G."/>
            <person name="Pevzner P.A."/>
            <person name="Haussler D."/>
            <person name="Roskin K.M."/>
            <person name="Baertsch R."/>
            <person name="Clawson H."/>
            <person name="Furey T.S."/>
            <person name="Hinrichs A.S."/>
            <person name="Karolchik D."/>
            <person name="Kent W.J."/>
            <person name="Rosenbloom K.R."/>
            <person name="Trumbower H."/>
            <person name="Weirauch M."/>
            <person name="Cooper D.N."/>
            <person name="Stenson P.D."/>
            <person name="Ma B."/>
            <person name="Brent M."/>
            <person name="Arumugam M."/>
            <person name="Shteynberg D."/>
            <person name="Copley R.R."/>
            <person name="Taylor M.S."/>
            <person name="Riethman H."/>
            <person name="Mudunuri U."/>
            <person name="Peterson J."/>
            <person name="Guyer M."/>
            <person name="Felsenfeld A."/>
            <person name="Old S."/>
            <person name="Mockrin S."/>
            <person name="Collins F.S."/>
        </authorList>
    </citation>
    <scope>NUCLEOTIDE SEQUENCE [LARGE SCALE GENOMIC DNA]</scope>
    <source>
        <strain evidence="16">Brown Norway</strain>
    </source>
</reference>
<reference evidence="15" key="2">
    <citation type="submission" date="2005-01" db="EMBL/GenBank/DDBJ databases">
        <authorList>
            <person name="Mural R.J."/>
            <person name="Adams M.D."/>
            <person name="Myers E.W."/>
            <person name="Smith H.O."/>
            <person name="Venter J.C."/>
        </authorList>
    </citation>
    <scope>NUCLEOTIDE SEQUENCE [LARGE SCALE GENOMIC DNA]</scope>
    <source>
        <strain evidence="15">Brown Norway</strain>
    </source>
</reference>
<reference evidence="14" key="3">
    <citation type="journal article" date="2009" name="J. Biol. Chem.">
        <title>C terminus of Hsc70-interacting protein promotes smooth muscle cell proliferation and survival through ubiquitin-mediated degradation of FoxO1.</title>
        <authorList>
            <person name="Li F."/>
            <person name="Xie P."/>
            <person name="Fan Y."/>
            <person name="Zhang H."/>
            <person name="Zheng L."/>
            <person name="Gu D."/>
            <person name="Patterson C."/>
            <person name="Li H."/>
        </authorList>
    </citation>
    <scope>FUNCTION</scope>
    <scope>SUBCELLULAR LOCATION</scope>
    <scope>TISSUE SPECIFICITY</scope>
    <scope>INDUCTION BY BLOOD FLOW CESSATION INJURY</scope>
</reference>
<reference evidence="14" key="4">
    <citation type="journal article" date="2009" name="Mol. Cell. Biol.">
        <title>CHIP represses myocardin-induced smooth muscle cell differentiation via ubiquitin-mediated proteasomal degradation.</title>
        <authorList>
            <person name="Xie P."/>
            <person name="Fan Y."/>
            <person name="Zhang H."/>
            <person name="Zhang Y."/>
            <person name="She M."/>
            <person name="Gu D."/>
            <person name="Patterson C."/>
            <person name="Li H."/>
        </authorList>
    </citation>
    <scope>FUNCTION</scope>
    <scope>INTERACTION WITH MYOCD AND HSPA1A</scope>
    <scope>SUBCELLULAR LOCATION</scope>
</reference>
<reference evidence="14" key="5">
    <citation type="journal article" date="2010" name="FASEB J.">
        <title>Novel role of C terminus of Hsc70-interacting protein (CHIP) ubiquitin ligase on inhibiting cardiac apoptosis and dysfunction via regulating ERK5-mediated degradation of inducible cAMP early repressor.</title>
        <authorList>
            <person name="Woo C.H."/>
            <person name="Le N.T."/>
            <person name="Shishido T."/>
            <person name="Chang E."/>
            <person name="Lee H."/>
            <person name="Heo K.S."/>
            <person name="Mickelsen D.M."/>
            <person name="Lu Y."/>
            <person name="McClain C."/>
            <person name="Spangenberg T."/>
            <person name="Yan C."/>
            <person name="Molina C.A."/>
            <person name="Yang J."/>
            <person name="Patterson C."/>
            <person name="Abe J."/>
        </authorList>
    </citation>
    <scope>FUNCTION</scope>
</reference>
<reference evidence="14" key="6">
    <citation type="journal article" date="2011" name="Proc. Natl. Acad. Sci. U.S.A.">
        <title>C terminus of Hsc70-interacting protein (CHIP)-mediated degradation of hippocampal estrogen receptor-alpha and the critical period hypothesis of estrogen neuroprotection.</title>
        <authorList>
            <person name="Zhang Q.G."/>
            <person name="Han D."/>
            <person name="Wang R.M."/>
            <person name="Dong Y."/>
            <person name="Yang F."/>
            <person name="Vadlamudi R.K."/>
            <person name="Brann D.W."/>
        </authorList>
    </citation>
    <scope>FUNCTION</scope>
    <scope>INTERACTION WITH ESR1 AND ESR2</scope>
    <scope>TISSUE SPECIFICITY</scope>
</reference>
<reference evidence="14" key="7">
    <citation type="journal article" date="2015" name="Biochem. Pharmacol.">
        <title>UBXN2A regulates nicotinic receptor degradation by modulating the E3 ligase activity of CHIP.</title>
        <authorList>
            <person name="Teng Y."/>
            <person name="Rezvani K."/>
            <person name="De Biasi M."/>
        </authorList>
    </citation>
    <scope>FUNCTION</scope>
    <scope>IDENTIFICATION IN A COMPLEX WITH UBXN2A; VCP AND CHRNA3</scope>
</reference>
<reference evidence="14" key="8">
    <citation type="journal article" date="2018" name="J. Neurosci.">
        <title>Neuronal Preconditioning Requires the Mitophagic Activity of C-terminus of HSC70-Interacting Protein.</title>
        <authorList>
            <person name="Lizama B.N."/>
            <person name="Palubinsky A.M."/>
            <person name="Raveendran V.A."/>
            <person name="Moore A.M."/>
            <person name="Federspiel J.D."/>
            <person name="Codreanu S.G."/>
            <person name="Liebler D.C."/>
            <person name="McLaughlin B."/>
        </authorList>
    </citation>
    <scope>FUNCTION</scope>
    <scope>SUBCELLULAR LOCATION</scope>
    <scope>DEVELOPMENTAL STAGE</scope>
    <scope>INDUCTION BY OXYGEN AND GLUCOSE DEPRIVATION</scope>
</reference>
<reference key="9">
    <citation type="journal article" date="2019" name="J. Cell. Physiol.">
        <title>CHIP attenuates lipopolysaccharide-induced cardiac hypertrophy and apoptosis by promoting NFATc3 proteasomal degradation.</title>
        <authorList>
            <person name="Chao C.N."/>
            <person name="Lai C.H."/>
            <person name="Badrealam K.F."/>
            <person name="Lo J.F."/>
            <person name="Shen C.Y."/>
            <person name="Chen C.H."/>
            <person name="Chen R.J."/>
            <person name="Viswanadha V.P."/>
            <person name="Kuo W.W."/>
            <person name="Huang C.Y."/>
        </authorList>
    </citation>
    <scope>FUNCTION</scope>
    <scope>INTERACTION WITH NFATC3</scope>
    <scope>SUBCELLULAR LOCATION</scope>
</reference>
<accession>A6HD62</accession>
<accession>D4A4T0</accession>
<proteinExistence type="evidence at protein level"/>
<organism evidence="16">
    <name type="scientific">Rattus norvegicus</name>
    <name type="common">Rat</name>
    <dbReference type="NCBI Taxonomy" id="10116"/>
    <lineage>
        <taxon>Eukaryota</taxon>
        <taxon>Metazoa</taxon>
        <taxon>Chordata</taxon>
        <taxon>Craniata</taxon>
        <taxon>Vertebrata</taxon>
        <taxon>Euteleostomi</taxon>
        <taxon>Mammalia</taxon>
        <taxon>Eutheria</taxon>
        <taxon>Euarchontoglires</taxon>
        <taxon>Glires</taxon>
        <taxon>Rodentia</taxon>
        <taxon>Myomorpha</taxon>
        <taxon>Muroidea</taxon>
        <taxon>Muridae</taxon>
        <taxon>Murinae</taxon>
        <taxon>Rattus</taxon>
    </lineage>
</organism>
<gene>
    <name evidence="17" type="primary">Stub1</name>
    <name evidence="13" type="synonym">Chip</name>
</gene>
<evidence type="ECO:0000250" key="1">
    <source>
        <dbReference type="UniProtKB" id="Q9UNE7"/>
    </source>
</evidence>
<evidence type="ECO:0000250" key="2">
    <source>
        <dbReference type="UniProtKB" id="Q9WUD1"/>
    </source>
</evidence>
<evidence type="ECO:0000255" key="3">
    <source>
        <dbReference type="PROSITE-ProRule" id="PRU00339"/>
    </source>
</evidence>
<evidence type="ECO:0000255" key="4">
    <source>
        <dbReference type="PROSITE-ProRule" id="PRU01034"/>
    </source>
</evidence>
<evidence type="ECO:0000256" key="5">
    <source>
        <dbReference type="SAM" id="MobiDB-lite"/>
    </source>
</evidence>
<evidence type="ECO:0000269" key="6">
    <source>
    </source>
</evidence>
<evidence type="ECO:0000269" key="7">
    <source>
    </source>
</evidence>
<evidence type="ECO:0000269" key="8">
    <source>
    </source>
</evidence>
<evidence type="ECO:0000269" key="9">
    <source>
    </source>
</evidence>
<evidence type="ECO:0000269" key="10">
    <source>
    </source>
</evidence>
<evidence type="ECO:0000269" key="11">
    <source>
    </source>
</evidence>
<evidence type="ECO:0000269" key="12">
    <source>
    </source>
</evidence>
<evidence type="ECO:0000303" key="13">
    <source>
    </source>
</evidence>
<evidence type="ECO:0000305" key="14"/>
<evidence type="ECO:0000312" key="15">
    <source>
        <dbReference type="EMBL" id="EDM03968.1"/>
    </source>
</evidence>
<evidence type="ECO:0000312" key="16">
    <source>
        <dbReference type="Proteomes" id="UP000002494"/>
    </source>
</evidence>
<evidence type="ECO:0000312" key="17">
    <source>
        <dbReference type="RGD" id="1306167"/>
    </source>
</evidence>